<feature type="chain" id="PRO_0000154626" description="Large ribosomal subunit protein uL10">
    <location>
        <begin position="1"/>
        <end position="173"/>
    </location>
</feature>
<name>RL10_NITV2</name>
<gene>
    <name evidence="1" type="primary">rplJ</name>
    <name type="ordered locus">DVU_2926</name>
</gene>
<organism>
    <name type="scientific">Nitratidesulfovibrio vulgaris (strain ATCC 29579 / DSM 644 / CCUG 34227 / NCIMB 8303 / VKM B-1760 / Hildenborough)</name>
    <name type="common">Desulfovibrio vulgaris</name>
    <dbReference type="NCBI Taxonomy" id="882"/>
    <lineage>
        <taxon>Bacteria</taxon>
        <taxon>Pseudomonadati</taxon>
        <taxon>Thermodesulfobacteriota</taxon>
        <taxon>Desulfovibrionia</taxon>
        <taxon>Desulfovibrionales</taxon>
        <taxon>Desulfovibrionaceae</taxon>
        <taxon>Nitratidesulfovibrio</taxon>
    </lineage>
</organism>
<comment type="function">
    <text evidence="1">Forms part of the ribosomal stalk, playing a central role in the interaction of the ribosome with GTP-bound translation factors.</text>
</comment>
<comment type="subunit">
    <text evidence="1">Part of the ribosomal stalk of the 50S ribosomal subunit. The N-terminus interacts with L11 and the large rRNA to form the base of the stalk. The C-terminus forms an elongated spine to which L12 dimers bind in a sequential fashion forming a multimeric L10(L12)X complex.</text>
</comment>
<comment type="similarity">
    <text evidence="1">Belongs to the universal ribosomal protein uL10 family.</text>
</comment>
<sequence length="173" mass="18741">MNRSEKAAIIEQLKSRAEAASIAVVTDFKGMPVEELTRLRVKLRENGCEYHVVKNTLARIAFTGTAHEPIGTRFKENCAVALGFDDPVAVAKALTDFAKTSKLFAIRHGSLEGKALSADQVSDLAKLPSKPELLARALGTMNAVPTNFVSLFANIIRSLLYVLKDLESKKAAA</sequence>
<dbReference type="EMBL" id="AE017285">
    <property type="protein sequence ID" value="AAS97398.1"/>
    <property type="molecule type" value="Genomic_DNA"/>
</dbReference>
<dbReference type="RefSeq" id="WP_010940186.1">
    <property type="nucleotide sequence ID" value="NC_002937.3"/>
</dbReference>
<dbReference type="RefSeq" id="YP_012138.1">
    <property type="nucleotide sequence ID" value="NC_002937.3"/>
</dbReference>
<dbReference type="SMR" id="Q727C9"/>
<dbReference type="STRING" id="882.DVU_2926"/>
<dbReference type="PaxDb" id="882-DVU_2926"/>
<dbReference type="EnsemblBacteria" id="AAS97398">
    <property type="protein sequence ID" value="AAS97398"/>
    <property type="gene ID" value="DVU_2926"/>
</dbReference>
<dbReference type="KEGG" id="dvu:DVU_2926"/>
<dbReference type="PATRIC" id="fig|882.5.peg.2645"/>
<dbReference type="eggNOG" id="COG0244">
    <property type="taxonomic scope" value="Bacteria"/>
</dbReference>
<dbReference type="HOGENOM" id="CLU_092227_1_2_7"/>
<dbReference type="OrthoDB" id="3186107at2"/>
<dbReference type="PhylomeDB" id="Q727C9"/>
<dbReference type="Proteomes" id="UP000002194">
    <property type="component" value="Chromosome"/>
</dbReference>
<dbReference type="GO" id="GO:1990904">
    <property type="term" value="C:ribonucleoprotein complex"/>
    <property type="evidence" value="ECO:0007669"/>
    <property type="project" value="UniProtKB-KW"/>
</dbReference>
<dbReference type="GO" id="GO:0005840">
    <property type="term" value="C:ribosome"/>
    <property type="evidence" value="ECO:0007669"/>
    <property type="project" value="UniProtKB-KW"/>
</dbReference>
<dbReference type="GO" id="GO:0070180">
    <property type="term" value="F:large ribosomal subunit rRNA binding"/>
    <property type="evidence" value="ECO:0007669"/>
    <property type="project" value="UniProtKB-UniRule"/>
</dbReference>
<dbReference type="GO" id="GO:0006412">
    <property type="term" value="P:translation"/>
    <property type="evidence" value="ECO:0007669"/>
    <property type="project" value="UniProtKB-UniRule"/>
</dbReference>
<dbReference type="CDD" id="cd05797">
    <property type="entry name" value="Ribosomal_L10"/>
    <property type="match status" value="1"/>
</dbReference>
<dbReference type="Gene3D" id="3.30.70.1730">
    <property type="match status" value="1"/>
</dbReference>
<dbReference type="Gene3D" id="6.10.250.290">
    <property type="match status" value="1"/>
</dbReference>
<dbReference type="HAMAP" id="MF_00362">
    <property type="entry name" value="Ribosomal_uL10"/>
    <property type="match status" value="1"/>
</dbReference>
<dbReference type="InterPro" id="IPR001790">
    <property type="entry name" value="Ribosomal_uL10"/>
</dbReference>
<dbReference type="InterPro" id="IPR043141">
    <property type="entry name" value="Ribosomal_uL10-like_sf"/>
</dbReference>
<dbReference type="InterPro" id="IPR022973">
    <property type="entry name" value="Ribosomal_uL10_bac"/>
</dbReference>
<dbReference type="InterPro" id="IPR047865">
    <property type="entry name" value="Ribosomal_uL10_bac_type"/>
</dbReference>
<dbReference type="NCBIfam" id="NF000955">
    <property type="entry name" value="PRK00099.1-1"/>
    <property type="match status" value="1"/>
</dbReference>
<dbReference type="PANTHER" id="PTHR11560">
    <property type="entry name" value="39S RIBOSOMAL PROTEIN L10, MITOCHONDRIAL"/>
    <property type="match status" value="1"/>
</dbReference>
<dbReference type="Pfam" id="PF00466">
    <property type="entry name" value="Ribosomal_L10"/>
    <property type="match status" value="1"/>
</dbReference>
<dbReference type="SUPFAM" id="SSF160369">
    <property type="entry name" value="Ribosomal protein L10-like"/>
    <property type="match status" value="1"/>
</dbReference>
<reference key="1">
    <citation type="journal article" date="2004" name="Nat. Biotechnol.">
        <title>The genome sequence of the anaerobic, sulfate-reducing bacterium Desulfovibrio vulgaris Hildenborough.</title>
        <authorList>
            <person name="Heidelberg J.F."/>
            <person name="Seshadri R."/>
            <person name="Haveman S.A."/>
            <person name="Hemme C.L."/>
            <person name="Paulsen I.T."/>
            <person name="Kolonay J.F."/>
            <person name="Eisen J.A."/>
            <person name="Ward N.L."/>
            <person name="Methe B.A."/>
            <person name="Brinkac L.M."/>
            <person name="Daugherty S.C."/>
            <person name="DeBoy R.T."/>
            <person name="Dodson R.J."/>
            <person name="Durkin A.S."/>
            <person name="Madupu R."/>
            <person name="Nelson W.C."/>
            <person name="Sullivan S.A."/>
            <person name="Fouts D.E."/>
            <person name="Haft D.H."/>
            <person name="Selengut J."/>
            <person name="Peterson J.D."/>
            <person name="Davidsen T.M."/>
            <person name="Zafar N."/>
            <person name="Zhou L."/>
            <person name="Radune D."/>
            <person name="Dimitrov G."/>
            <person name="Hance M."/>
            <person name="Tran K."/>
            <person name="Khouri H.M."/>
            <person name="Gill J."/>
            <person name="Utterback T.R."/>
            <person name="Feldblyum T.V."/>
            <person name="Wall J.D."/>
            <person name="Voordouw G."/>
            <person name="Fraser C.M."/>
        </authorList>
    </citation>
    <scope>NUCLEOTIDE SEQUENCE [LARGE SCALE GENOMIC DNA]</scope>
    <source>
        <strain>ATCC 29579 / DSM 644 / CCUG 34227 / NCIMB 8303 / VKM B-1760 / Hildenborough</strain>
    </source>
</reference>
<evidence type="ECO:0000255" key="1">
    <source>
        <dbReference type="HAMAP-Rule" id="MF_00362"/>
    </source>
</evidence>
<evidence type="ECO:0000305" key="2"/>
<keyword id="KW-1185">Reference proteome</keyword>
<keyword id="KW-0687">Ribonucleoprotein</keyword>
<keyword id="KW-0689">Ribosomal protein</keyword>
<keyword id="KW-0694">RNA-binding</keyword>
<keyword id="KW-0699">rRNA-binding</keyword>
<proteinExistence type="inferred from homology"/>
<accession>Q727C9</accession>
<protein>
    <recommendedName>
        <fullName evidence="1">Large ribosomal subunit protein uL10</fullName>
    </recommendedName>
    <alternativeName>
        <fullName evidence="2">50S ribosomal protein L10</fullName>
    </alternativeName>
</protein>